<accession>Q5RFI8</accession>
<organism>
    <name type="scientific">Pongo abelii</name>
    <name type="common">Sumatran orangutan</name>
    <name type="synonym">Pongo pygmaeus abelii</name>
    <dbReference type="NCBI Taxonomy" id="9601"/>
    <lineage>
        <taxon>Eukaryota</taxon>
        <taxon>Metazoa</taxon>
        <taxon>Chordata</taxon>
        <taxon>Craniata</taxon>
        <taxon>Vertebrata</taxon>
        <taxon>Euteleostomi</taxon>
        <taxon>Mammalia</taxon>
        <taxon>Eutheria</taxon>
        <taxon>Euarchontoglires</taxon>
        <taxon>Primates</taxon>
        <taxon>Haplorrhini</taxon>
        <taxon>Catarrhini</taxon>
        <taxon>Hominidae</taxon>
        <taxon>Pongo</taxon>
    </lineage>
</organism>
<sequence>MAAPEGSGLGEDARLDQETAQWLHWDKNSLTLEAVKRLIAEGNEEELRKCFGARMEFGTAGLRAAMGPGISRMNDLTIIQTTQGFCRYLEKQFSDLKQKGIVISFDARAHPSSGGSSRRFARLAATTFISQGIPVYLFSDITPTPFVPFTVSRLKLCAGIMITASHNPKQDNGYKVYWDNGAQIISPHDKGISQAIEENLEPWPQAWDDSLIDSSPLLHNPSASINNDYFEDLKKYCFHRSVNRETKVKFVHTSVHGVGHSFVQSAFKAFDLVPPEAVPEQKDPDPEFPTVKYPNPEEGKGVLTLSFALADKTKARIVLANDPDADRLAVAEKQDSGEWRVFSGNELGALLGWWLFTSWKEKNQDRSALKDTYMLSSTVSSKILRAIALKEGFHFEETLTGFKWMGNRAKQLIDQGKTVLFAFEEAIGYMCCPFVLDKDGVSAAVISAELASFLATKNLSLSQQLKAIYVEYGYHITKASYFICHDQDTIKKLFENLRSYDGKNNYPKACGKFEISAIRDLTTGYDDNQPDKKAVLPTSKSSQMITFTFANGGVATMRTSGTEPKIKYYAELCAPPGNSDPEQLKKELNELVSAIEEHFFQPQKYNLQPKAD</sequence>
<feature type="initiator methionine" description="Removed" evidence="2">
    <location>
        <position position="1"/>
    </location>
</feature>
<feature type="chain" id="PRO_0000147783" description="Phosphopentomutase">
    <location>
        <begin position="2"/>
        <end position="612"/>
    </location>
</feature>
<feature type="active site" description="Phosphoserine intermediate" evidence="1">
    <location>
        <position position="165"/>
    </location>
</feature>
<feature type="binding site" evidence="1">
    <location>
        <position position="63"/>
    </location>
    <ligand>
        <name>alpha-D-glucose 1,6-bisphosphate</name>
        <dbReference type="ChEBI" id="CHEBI:58392"/>
    </ligand>
</feature>
<feature type="binding site" evidence="1">
    <location>
        <position position="165"/>
    </location>
    <ligand>
        <name>alpha-D-glucose 1,6-bisphosphate</name>
        <dbReference type="ChEBI" id="CHEBI:58392"/>
    </ligand>
</feature>
<feature type="binding site" description="via phosphate group" evidence="1">
    <location>
        <position position="165"/>
    </location>
    <ligand>
        <name>Mg(2+)</name>
        <dbReference type="ChEBI" id="CHEBI:18420"/>
    </ligand>
</feature>
<feature type="binding site" evidence="1">
    <location>
        <position position="322"/>
    </location>
    <ligand>
        <name>Mg(2+)</name>
        <dbReference type="ChEBI" id="CHEBI:18420"/>
    </ligand>
</feature>
<feature type="binding site" evidence="1">
    <location>
        <position position="324"/>
    </location>
    <ligand>
        <name>Mg(2+)</name>
        <dbReference type="ChEBI" id="CHEBI:18420"/>
    </ligand>
</feature>
<feature type="binding site" evidence="1">
    <location>
        <position position="326"/>
    </location>
    <ligand>
        <name>alpha-D-glucose 1,6-bisphosphate</name>
        <dbReference type="ChEBI" id="CHEBI:58392"/>
    </ligand>
</feature>
<feature type="binding site" evidence="1">
    <location>
        <position position="326"/>
    </location>
    <ligand>
        <name>Mg(2+)</name>
        <dbReference type="ChEBI" id="CHEBI:18420"/>
    </ligand>
</feature>
<feature type="binding site" evidence="1">
    <location>
        <position position="327"/>
    </location>
    <ligand>
        <name>alpha-D-glucose 1,6-bisphosphate</name>
        <dbReference type="ChEBI" id="CHEBI:58392"/>
    </ligand>
</feature>
<feature type="binding site" evidence="1">
    <location>
        <position position="400"/>
    </location>
    <ligand>
        <name>alpha-D-glucose 1,6-bisphosphate</name>
        <dbReference type="ChEBI" id="CHEBI:58392"/>
    </ligand>
</feature>
<feature type="binding site" evidence="1">
    <location>
        <position position="424"/>
    </location>
    <ligand>
        <name>alpha-D-glucose 1,6-bisphosphate</name>
        <dbReference type="ChEBI" id="CHEBI:58392"/>
    </ligand>
</feature>
<feature type="binding site" evidence="1">
    <location>
        <position position="438"/>
    </location>
    <ligand>
        <name>alpha-D-glucose 1,6-bisphosphate</name>
        <dbReference type="ChEBI" id="CHEBI:58392"/>
    </ligand>
</feature>
<feature type="modified residue" description="N-acetylalanine" evidence="2">
    <location>
        <position position="2"/>
    </location>
</feature>
<feature type="modified residue" description="Phosphoserine" evidence="2">
    <location>
        <position position="165"/>
    </location>
</feature>
<evidence type="ECO:0000250" key="1">
    <source>
        <dbReference type="UniProtKB" id="P00949"/>
    </source>
</evidence>
<evidence type="ECO:0000250" key="2">
    <source>
        <dbReference type="UniProtKB" id="Q96G03"/>
    </source>
</evidence>
<evidence type="ECO:0000305" key="3"/>
<keyword id="KW-0007">Acetylation</keyword>
<keyword id="KW-0119">Carbohydrate metabolism</keyword>
<keyword id="KW-0963">Cytoplasm</keyword>
<keyword id="KW-0313">Glucose metabolism</keyword>
<keyword id="KW-0413">Isomerase</keyword>
<keyword id="KW-0460">Magnesium</keyword>
<keyword id="KW-0479">Metal-binding</keyword>
<keyword id="KW-0597">Phosphoprotein</keyword>
<keyword id="KW-1185">Reference proteome</keyword>
<reference key="1">
    <citation type="submission" date="2004-11" db="EMBL/GenBank/DDBJ databases">
        <authorList>
            <consortium name="The German cDNA consortium"/>
        </authorList>
    </citation>
    <scope>NUCLEOTIDE SEQUENCE [LARGE SCALE MRNA]</scope>
    <source>
        <tissue>Kidney</tissue>
    </source>
</reference>
<protein>
    <recommendedName>
        <fullName evidence="3">Phosphopentomutase</fullName>
        <ecNumber evidence="2">5.4.2.7</ecNumber>
    </recommendedName>
    <alternativeName>
        <fullName>Glucose phosphomutase 2</fullName>
    </alternativeName>
    <alternativeName>
        <fullName>Phosphodeoxyribomutase</fullName>
    </alternativeName>
    <alternativeName>
        <fullName evidence="3">Phosphoglucomutase-2</fullName>
        <shortName>PGM 2</shortName>
        <ecNumber evidence="2">5.4.2.2</ecNumber>
    </alternativeName>
</protein>
<gene>
    <name type="primary">PGM2</name>
</gene>
<proteinExistence type="evidence at transcript level"/>
<comment type="function">
    <text evidence="2">Catalyzes the conversion of the nucleoside breakdown products ribose-1-phosphate and deoxyribose-1-phosphate to the corresponding 5-phosphopentoses (By similarity). Catalyzes the reversible isomerization of alpha-D-glucose 1-phosphate to alpha-D-glucose 6-phosphate but with a lower catalytic efficiency (By similarity). The mechanism proceeds via the intermediate compound alpha-D-glucose 1,6-bisphosphate (By similarity). In vitro, also has a low glucose 1,6-bisphosphate synthase activity which is most probably not physiologically relevant (By similarity).</text>
</comment>
<comment type="catalytic activity">
    <reaction evidence="2">
        <text>alpha-D-ribose 1-phosphate = D-ribose 5-phosphate</text>
        <dbReference type="Rhea" id="RHEA:18793"/>
        <dbReference type="ChEBI" id="CHEBI:57720"/>
        <dbReference type="ChEBI" id="CHEBI:78346"/>
        <dbReference type="EC" id="5.4.2.7"/>
    </reaction>
</comment>
<comment type="catalytic activity">
    <reaction evidence="2">
        <text>2-deoxy-alpha-D-ribose 1-phosphate = 2-deoxy-D-ribose 5-phosphate</text>
        <dbReference type="Rhea" id="RHEA:27658"/>
        <dbReference type="ChEBI" id="CHEBI:57259"/>
        <dbReference type="ChEBI" id="CHEBI:62877"/>
        <dbReference type="EC" id="5.4.2.7"/>
    </reaction>
</comment>
<comment type="catalytic activity">
    <reaction evidence="2">
        <text>alpha-D-glucose 1-phosphate = alpha-D-glucose 6-phosphate</text>
        <dbReference type="Rhea" id="RHEA:23536"/>
        <dbReference type="ChEBI" id="CHEBI:58225"/>
        <dbReference type="ChEBI" id="CHEBI:58601"/>
        <dbReference type="EC" id="5.4.2.2"/>
    </reaction>
</comment>
<comment type="catalytic activity">
    <reaction evidence="2">
        <text>O-phospho-L-seryl-[protein] + alpha-D-glucose 1-phosphate = alpha-D-glucose 1,6-bisphosphate + L-seryl-[protein]</text>
        <dbReference type="Rhea" id="RHEA:68748"/>
        <dbReference type="Rhea" id="RHEA-COMP:9863"/>
        <dbReference type="Rhea" id="RHEA-COMP:11604"/>
        <dbReference type="ChEBI" id="CHEBI:29999"/>
        <dbReference type="ChEBI" id="CHEBI:58392"/>
        <dbReference type="ChEBI" id="CHEBI:58601"/>
        <dbReference type="ChEBI" id="CHEBI:83421"/>
    </reaction>
</comment>
<comment type="catalytic activity">
    <reaction evidence="2">
        <text>alpha-D-glucose 1,6-bisphosphate + L-seryl-[protein] = O-phospho-L-seryl-[protein] + alpha-D-glucose 6-phosphate</text>
        <dbReference type="Rhea" id="RHEA:68752"/>
        <dbReference type="Rhea" id="RHEA-COMP:9863"/>
        <dbReference type="Rhea" id="RHEA-COMP:11604"/>
        <dbReference type="ChEBI" id="CHEBI:29999"/>
        <dbReference type="ChEBI" id="CHEBI:58225"/>
        <dbReference type="ChEBI" id="CHEBI:58392"/>
        <dbReference type="ChEBI" id="CHEBI:83421"/>
    </reaction>
</comment>
<comment type="cofactor">
    <cofactor evidence="1">
        <name>Mg(2+)</name>
        <dbReference type="ChEBI" id="CHEBI:18420"/>
    </cofactor>
    <text evidence="1">Binds 1 Mg(2+) ion per subunit.</text>
</comment>
<comment type="subunit">
    <text evidence="1">Monomer.</text>
</comment>
<comment type="subcellular location">
    <subcellularLocation>
        <location evidence="2">Cytoplasm</location>
        <location evidence="2">Cytosol</location>
    </subcellularLocation>
</comment>
<comment type="similarity">
    <text evidence="3">Belongs to the phosphohexose mutase family.</text>
</comment>
<name>PGM2_PONAB</name>
<dbReference type="EC" id="5.4.2.7" evidence="2"/>
<dbReference type="EC" id="5.4.2.2" evidence="2"/>
<dbReference type="EMBL" id="CR857168">
    <property type="protein sequence ID" value="CAH89469.1"/>
    <property type="molecule type" value="mRNA"/>
</dbReference>
<dbReference type="RefSeq" id="NP_001128996.1">
    <property type="nucleotide sequence ID" value="NM_001135524.2"/>
</dbReference>
<dbReference type="SMR" id="Q5RFI8"/>
<dbReference type="STRING" id="9601.ENSPPYP00000016381"/>
<dbReference type="GeneID" id="100190836"/>
<dbReference type="KEGG" id="pon:100190836"/>
<dbReference type="CTD" id="55276"/>
<dbReference type="eggNOG" id="KOG1220">
    <property type="taxonomic scope" value="Eukaryota"/>
</dbReference>
<dbReference type="InParanoid" id="Q5RFI8"/>
<dbReference type="OrthoDB" id="8300170at2759"/>
<dbReference type="Proteomes" id="UP000001595">
    <property type="component" value="Unplaced"/>
</dbReference>
<dbReference type="GO" id="GO:0005829">
    <property type="term" value="C:cytosol"/>
    <property type="evidence" value="ECO:0000250"/>
    <property type="project" value="UniProtKB"/>
</dbReference>
<dbReference type="GO" id="GO:0005634">
    <property type="term" value="C:nucleus"/>
    <property type="evidence" value="ECO:0007669"/>
    <property type="project" value="TreeGrafter"/>
</dbReference>
<dbReference type="GO" id="GO:0000287">
    <property type="term" value="F:magnesium ion binding"/>
    <property type="evidence" value="ECO:0007669"/>
    <property type="project" value="InterPro"/>
</dbReference>
<dbReference type="GO" id="GO:0004614">
    <property type="term" value="F:phosphoglucomutase activity"/>
    <property type="evidence" value="ECO:0000250"/>
    <property type="project" value="UniProtKB"/>
</dbReference>
<dbReference type="GO" id="GO:0008973">
    <property type="term" value="F:phosphopentomutase activity"/>
    <property type="evidence" value="ECO:0000250"/>
    <property type="project" value="UniProtKB"/>
</dbReference>
<dbReference type="GO" id="GO:0006006">
    <property type="term" value="P:glucose metabolic process"/>
    <property type="evidence" value="ECO:0007669"/>
    <property type="project" value="UniProtKB-KW"/>
</dbReference>
<dbReference type="GO" id="GO:0006166">
    <property type="term" value="P:purine ribonucleoside salvage"/>
    <property type="evidence" value="ECO:0007669"/>
    <property type="project" value="TreeGrafter"/>
</dbReference>
<dbReference type="CDD" id="cd05799">
    <property type="entry name" value="PGM2"/>
    <property type="match status" value="1"/>
</dbReference>
<dbReference type="FunFam" id="3.40.120.10:FF:000016">
    <property type="entry name" value="Glucose 1,6-bisphosphate synthase"/>
    <property type="match status" value="1"/>
</dbReference>
<dbReference type="FunFam" id="3.40.120.10:FF:000017">
    <property type="entry name" value="glucose 1,6-bisphosphate synthase"/>
    <property type="match status" value="1"/>
</dbReference>
<dbReference type="FunFam" id="3.40.120.10:FF:000030">
    <property type="entry name" value="Phosphoglucomutase 2"/>
    <property type="match status" value="1"/>
</dbReference>
<dbReference type="Gene3D" id="3.40.120.10">
    <property type="entry name" value="Alpha-D-Glucose-1,6-Bisphosphate, subunit A, domain 3"/>
    <property type="match status" value="3"/>
</dbReference>
<dbReference type="InterPro" id="IPR005844">
    <property type="entry name" value="A-D-PHexomutase_a/b/a-I"/>
</dbReference>
<dbReference type="InterPro" id="IPR016055">
    <property type="entry name" value="A-D-PHexomutase_a/b/a-I/II/III"/>
</dbReference>
<dbReference type="InterPro" id="IPR005845">
    <property type="entry name" value="A-D-PHexomutase_a/b/a-II"/>
</dbReference>
<dbReference type="InterPro" id="IPR005846">
    <property type="entry name" value="A-D-PHexomutase_a/b/a-III"/>
</dbReference>
<dbReference type="InterPro" id="IPR036900">
    <property type="entry name" value="A-D-PHexomutase_C_sf"/>
</dbReference>
<dbReference type="InterPro" id="IPR016066">
    <property type="entry name" value="A-D-PHexomutase_CS"/>
</dbReference>
<dbReference type="InterPro" id="IPR005841">
    <property type="entry name" value="Alpha-D-phosphohexomutase_SF"/>
</dbReference>
<dbReference type="PANTHER" id="PTHR45745">
    <property type="entry name" value="PHOSPHOMANNOMUTASE 45A"/>
    <property type="match status" value="1"/>
</dbReference>
<dbReference type="PANTHER" id="PTHR45745:SF3">
    <property type="entry name" value="PHOSPHOPENTOMUTASE"/>
    <property type="match status" value="1"/>
</dbReference>
<dbReference type="Pfam" id="PF02878">
    <property type="entry name" value="PGM_PMM_I"/>
    <property type="match status" value="1"/>
</dbReference>
<dbReference type="Pfam" id="PF02879">
    <property type="entry name" value="PGM_PMM_II"/>
    <property type="match status" value="1"/>
</dbReference>
<dbReference type="Pfam" id="PF02880">
    <property type="entry name" value="PGM_PMM_III"/>
    <property type="match status" value="1"/>
</dbReference>
<dbReference type="PRINTS" id="PR00509">
    <property type="entry name" value="PGMPMM"/>
</dbReference>
<dbReference type="SUPFAM" id="SSF55957">
    <property type="entry name" value="Phosphoglucomutase, C-terminal domain"/>
    <property type="match status" value="1"/>
</dbReference>
<dbReference type="SUPFAM" id="SSF53738">
    <property type="entry name" value="Phosphoglucomutase, first 3 domains"/>
    <property type="match status" value="3"/>
</dbReference>
<dbReference type="PROSITE" id="PS00710">
    <property type="entry name" value="PGM_PMM"/>
    <property type="match status" value="1"/>
</dbReference>